<sequence length="489" mass="52365">MESTFSSPAEAALQREAGVPGQFTPPEDLDRVYELERVTKFVCDLGCQRVTLQFPDQLLGDAGAVAARLEEVTGAKMFILGDTAYGSCCVDVLGAEQAGAQALVHFGPACLSPPASQLPITFVLGQRPVALELCAKAFEAQNPDPTAPVVLLSEPACAHALEPLAMLLLPKYQDLLISRPALPLPVGSPSSQPESLERFGRCFPLNPGRRLEEYGAFYVGASQASSDSSLDPDLSRLLLGWTPGRPFFSCCPDTGQTQDQGAKAGRLRARRLYLIERARDARVVGLLAGTLGVARHREALAHLRKLTEAAGKRSYVLAVGKPTPAKLANFPEMDVFVLLACPLGALAPQPSGGFFRPVLTPCELEAACNPAWPPPGLAPHLTHYAELLPGSPFHVPLPPPESELWDTPDVSLISGELRPPPPWKSSDDTRCSALIPRPQLELAESSPAASFLSSRNWQGLEPRLGQTPVKEAVRGRRGIAIAYEDEGSS</sequence>
<feature type="chain" id="PRO_0000307890" description="2-(3-amino-3-carboxypropyl)histidine synthase subunit 2">
    <location>
        <begin position="1"/>
        <end position="489"/>
    </location>
</feature>
<feature type="binding site" evidence="1">
    <location>
        <position position="89"/>
    </location>
    <ligand>
        <name>[4Fe-4S] cluster</name>
        <dbReference type="ChEBI" id="CHEBI:49883"/>
    </ligand>
</feature>
<feature type="binding site" evidence="1">
    <location>
        <position position="110"/>
    </location>
    <ligand>
        <name>[4Fe-4S] cluster</name>
        <dbReference type="ChEBI" id="CHEBI:49883"/>
    </ligand>
</feature>
<feature type="binding site" evidence="1">
    <location>
        <position position="341"/>
    </location>
    <ligand>
        <name>[4Fe-4S] cluster</name>
        <dbReference type="ChEBI" id="CHEBI:49883"/>
    </ligand>
</feature>
<feature type="modified residue" description="N-acetylmethionine" evidence="2">
    <location>
        <position position="1"/>
    </location>
</feature>
<feature type="modified residue" description="Phosphoserine" evidence="2">
    <location>
        <position position="7"/>
    </location>
</feature>
<feature type="modified residue" description="Phosphoserine" evidence="2">
    <location>
        <position position="446"/>
    </location>
</feature>
<feature type="modified residue" description="Phosphothreonine" evidence="2">
    <location>
        <position position="467"/>
    </location>
</feature>
<feature type="modified residue" description="Phosphoserine" evidence="2">
    <location>
        <position position="488"/>
    </location>
</feature>
<feature type="sequence conflict" description="In Ref. 3; AAH31124." evidence="5" ref="3">
    <original>T</original>
    <variation>I</variation>
    <location>
        <position position="290"/>
    </location>
</feature>
<accession>Q9CR25</accession>
<accession>Q8K0L8</accession>
<gene>
    <name type="primary">Dph2</name>
    <name type="synonym">Dph2l2</name>
</gene>
<proteinExistence type="evidence at protein level"/>
<keyword id="KW-0007">Acetylation</keyword>
<keyword id="KW-0408">Iron</keyword>
<keyword id="KW-0411">Iron-sulfur</keyword>
<keyword id="KW-0479">Metal-binding</keyword>
<keyword id="KW-0597">Phosphoprotein</keyword>
<keyword id="KW-1185">Reference proteome</keyword>
<dbReference type="EMBL" id="AK011199">
    <property type="protein sequence ID" value="BAB27462.1"/>
    <property type="molecule type" value="mRNA"/>
</dbReference>
<dbReference type="EMBL" id="AK018638">
    <property type="protein sequence ID" value="BAB31322.1"/>
    <property type="molecule type" value="mRNA"/>
</dbReference>
<dbReference type="EMBL" id="AL627128">
    <property type="status" value="NOT_ANNOTATED_CDS"/>
    <property type="molecule type" value="Genomic_DNA"/>
</dbReference>
<dbReference type="EMBL" id="BC031124">
    <property type="protein sequence ID" value="AAH31124.1"/>
    <property type="molecule type" value="mRNA"/>
</dbReference>
<dbReference type="CCDS" id="CCDS18541.1"/>
<dbReference type="RefSeq" id="NP_080620.1">
    <property type="nucleotide sequence ID" value="NM_026344.4"/>
</dbReference>
<dbReference type="SMR" id="Q9CR25"/>
<dbReference type="FunCoup" id="Q9CR25">
    <property type="interactions" value="638"/>
</dbReference>
<dbReference type="IntAct" id="Q9CR25">
    <property type="interactions" value="1"/>
</dbReference>
<dbReference type="STRING" id="10090.ENSMUSP00000030265"/>
<dbReference type="GlyGen" id="Q9CR25">
    <property type="glycosylation" value="2 sites, 1 O-linked glycan (1 site)"/>
</dbReference>
<dbReference type="iPTMnet" id="Q9CR25"/>
<dbReference type="PhosphoSitePlus" id="Q9CR25"/>
<dbReference type="SwissPalm" id="Q9CR25"/>
<dbReference type="PaxDb" id="10090-ENSMUSP00000030265"/>
<dbReference type="PeptideAtlas" id="Q9CR25"/>
<dbReference type="ProteomicsDB" id="279764"/>
<dbReference type="Pumba" id="Q9CR25"/>
<dbReference type="Antibodypedia" id="32411">
    <property type="antibodies" value="403 antibodies from 25 providers"/>
</dbReference>
<dbReference type="DNASU" id="67728"/>
<dbReference type="Ensembl" id="ENSMUST00000030265.4">
    <property type="protein sequence ID" value="ENSMUSP00000030265.4"/>
    <property type="gene ID" value="ENSMUSG00000028540.7"/>
</dbReference>
<dbReference type="GeneID" id="67728"/>
<dbReference type="KEGG" id="mmu:67728"/>
<dbReference type="UCSC" id="uc008ujd.1">
    <property type="organism name" value="mouse"/>
</dbReference>
<dbReference type="AGR" id="MGI:1914978"/>
<dbReference type="CTD" id="1802"/>
<dbReference type="MGI" id="MGI:1914978">
    <property type="gene designation" value="Dph2"/>
</dbReference>
<dbReference type="VEuPathDB" id="HostDB:ENSMUSG00000028540"/>
<dbReference type="eggNOG" id="KOG2648">
    <property type="taxonomic scope" value="Eukaryota"/>
</dbReference>
<dbReference type="GeneTree" id="ENSGT00940000153694"/>
<dbReference type="HOGENOM" id="CLU_015210_0_0_1"/>
<dbReference type="InParanoid" id="Q9CR25"/>
<dbReference type="OMA" id="QIWNENH"/>
<dbReference type="OrthoDB" id="449241at2759"/>
<dbReference type="PhylomeDB" id="Q9CR25"/>
<dbReference type="TreeFam" id="TF313832"/>
<dbReference type="BRENDA" id="2.5.1.108">
    <property type="organism ID" value="3474"/>
</dbReference>
<dbReference type="Reactome" id="R-MMU-5358493">
    <property type="pathway name" value="Synthesis of diphthamide-EEF2"/>
</dbReference>
<dbReference type="UniPathway" id="UPA00559"/>
<dbReference type="BioGRID-ORCS" id="67728">
    <property type="hits" value="20 hits in 78 CRISPR screens"/>
</dbReference>
<dbReference type="PRO" id="PR:Q9CR25"/>
<dbReference type="Proteomes" id="UP000000589">
    <property type="component" value="Chromosome 4"/>
</dbReference>
<dbReference type="RNAct" id="Q9CR25">
    <property type="molecule type" value="protein"/>
</dbReference>
<dbReference type="Bgee" id="ENSMUSG00000028540">
    <property type="expression patterns" value="Expressed in ear vesicle and 198 other cell types or tissues"/>
</dbReference>
<dbReference type="ExpressionAtlas" id="Q9CR25">
    <property type="expression patterns" value="baseline and differential"/>
</dbReference>
<dbReference type="GO" id="GO:0120513">
    <property type="term" value="C:2-(3-amino-3-carboxypropyl)histidine synthase complex"/>
    <property type="evidence" value="ECO:0000314"/>
    <property type="project" value="MGI"/>
</dbReference>
<dbReference type="GO" id="GO:0032991">
    <property type="term" value="C:protein-containing complex"/>
    <property type="evidence" value="ECO:0000314"/>
    <property type="project" value="MGI"/>
</dbReference>
<dbReference type="GO" id="GO:0090560">
    <property type="term" value="F:2-(3-amino-3-carboxypropyl)histidine synthase activity"/>
    <property type="evidence" value="ECO:0007669"/>
    <property type="project" value="UniProtKB-EC"/>
</dbReference>
<dbReference type="GO" id="GO:0051539">
    <property type="term" value="F:4 iron, 4 sulfur cluster binding"/>
    <property type="evidence" value="ECO:0000250"/>
    <property type="project" value="UniProtKB"/>
</dbReference>
<dbReference type="GO" id="GO:0046872">
    <property type="term" value="F:metal ion binding"/>
    <property type="evidence" value="ECO:0007669"/>
    <property type="project" value="UniProtKB-KW"/>
</dbReference>
<dbReference type="GO" id="GO:0017183">
    <property type="term" value="P:protein histidyl modification to diphthamide"/>
    <property type="evidence" value="ECO:0000250"/>
    <property type="project" value="UniProtKB"/>
</dbReference>
<dbReference type="FunFam" id="3.40.50.11840:FF:000002">
    <property type="entry name" value="2-(3-amino-3-carboxypropyl)histidine synthase subunit 2"/>
    <property type="match status" value="1"/>
</dbReference>
<dbReference type="FunFam" id="3.40.50.11860:FF:000001">
    <property type="entry name" value="2-(3-amino-3-carboxypropyl)histidine synthase subunit 2"/>
    <property type="match status" value="1"/>
</dbReference>
<dbReference type="Gene3D" id="3.40.50.11840">
    <property type="entry name" value="Diphthamide synthesis DPH1/DPH2 domain 1"/>
    <property type="match status" value="1"/>
</dbReference>
<dbReference type="Gene3D" id="3.40.50.11860">
    <property type="entry name" value="Diphthamide synthesis DPH1/DPH2 domain 3"/>
    <property type="match status" value="1"/>
</dbReference>
<dbReference type="InterPro" id="IPR010014">
    <property type="entry name" value="DHP2"/>
</dbReference>
<dbReference type="InterPro" id="IPR016435">
    <property type="entry name" value="DPH1/DPH2"/>
</dbReference>
<dbReference type="InterPro" id="IPR042263">
    <property type="entry name" value="DPH1/DPH2_1"/>
</dbReference>
<dbReference type="InterPro" id="IPR042265">
    <property type="entry name" value="DPH1/DPH2_3"/>
</dbReference>
<dbReference type="NCBIfam" id="TIGR00322">
    <property type="entry name" value="diphth2_R"/>
    <property type="match status" value="1"/>
</dbReference>
<dbReference type="NCBIfam" id="TIGR00272">
    <property type="entry name" value="DPH2"/>
    <property type="match status" value="1"/>
</dbReference>
<dbReference type="PANTHER" id="PTHR10762:SF2">
    <property type="entry name" value="2-(3-AMINO-3-CARBOXYPROPYL)HISTIDINE SYNTHASE SUBUNIT 2"/>
    <property type="match status" value="1"/>
</dbReference>
<dbReference type="PANTHER" id="PTHR10762">
    <property type="entry name" value="DIPHTHAMIDE BIOSYNTHESIS PROTEIN"/>
    <property type="match status" value="1"/>
</dbReference>
<dbReference type="Pfam" id="PF01866">
    <property type="entry name" value="Diphthamide_syn"/>
    <property type="match status" value="1"/>
</dbReference>
<dbReference type="SFLD" id="SFLDG01121">
    <property type="entry name" value="Diphthamide_biosynthesis"/>
    <property type="match status" value="1"/>
</dbReference>
<dbReference type="SFLD" id="SFLDF00408">
    <property type="entry name" value="Diphthamide_biosynthesis_famil"/>
    <property type="match status" value="1"/>
</dbReference>
<dbReference type="SFLD" id="SFLDS00032">
    <property type="entry name" value="Radical_SAM_3-amino-3-carboxyp"/>
    <property type="match status" value="1"/>
</dbReference>
<protein>
    <recommendedName>
        <fullName evidence="5">2-(3-amino-3-carboxypropyl)histidine synthase subunit 2</fullName>
    </recommendedName>
    <alternativeName>
        <fullName>Diphthamide biosynthesis protein 2</fullName>
    </alternativeName>
    <alternativeName>
        <fullName evidence="5">Diphtheria toxin resistance protein 2</fullName>
    </alternativeName>
    <alternativeName>
        <fullName>MmDph2</fullName>
    </alternativeName>
    <alternativeName>
        <fullName evidence="5">S-adenosyl-L-methionine:L-histidine 3-amino-3-carboxypropyltransferase DPH2</fullName>
    </alternativeName>
</protein>
<comment type="function">
    <text evidence="1 3">Required for the first step of diphthamide biosynthesis, a post-translational modification of histidine which occurs in elongation factor 2 (PubMed:15485916). DPH1 and DPH2 transfer a 3-amino-3-carboxypropyl (ACP) group from S-adenosyl-L-methionine (SAM) to a histidine residue, the reaction is assisted by a reduction system comprising DPH3 and a NADH-dependent reductase (By similarity). Facilitates the reduction of the catalytic iron-sulfur cluster found in the DPH1 subunit (By similarity).</text>
</comment>
<comment type="cofactor">
    <cofactor evidence="1">
        <name>[4Fe-4S] cluster</name>
        <dbReference type="ChEBI" id="CHEBI:49883"/>
    </cofactor>
    <text evidence="1">Binds 1 [4Fe-4S] cluster per subunit. The cluster facilitates the reduction of the catalytic iron-sulfur cluster in the DPH1 subunit.</text>
</comment>
<comment type="pathway">
    <text evidence="5">Protein modification; peptidyl-diphthamide biosynthesis.</text>
</comment>
<comment type="subunit">
    <text evidence="1 3 4">Component of the 2-(3-amino-3-carboxypropyl)histidine synthase complex composed of DPH1, DPH2, DPH3 and a NADH-dependent reductase (By similarity). Interacts with DPH1 (PubMed:15485916, PubMed:21203470).</text>
</comment>
<comment type="interaction">
    <interactant intactId="EBI-1561134">
        <id>Q9CR25</id>
    </interactant>
    <interactant intactId="EBI-1561119">
        <id>Q5NCQ5</id>
        <label>Dph1</label>
    </interactant>
    <organismsDiffer>false</organismsDiffer>
    <experiments>2</experiments>
</comment>
<comment type="similarity">
    <text evidence="5">Belongs to the DPH1/DPH2 family. DPH2 subfamily.</text>
</comment>
<reference key="1">
    <citation type="journal article" date="2005" name="Science">
        <title>The transcriptional landscape of the mammalian genome.</title>
        <authorList>
            <person name="Carninci P."/>
            <person name="Kasukawa T."/>
            <person name="Katayama S."/>
            <person name="Gough J."/>
            <person name="Frith M.C."/>
            <person name="Maeda N."/>
            <person name="Oyama R."/>
            <person name="Ravasi T."/>
            <person name="Lenhard B."/>
            <person name="Wells C."/>
            <person name="Kodzius R."/>
            <person name="Shimokawa K."/>
            <person name="Bajic V.B."/>
            <person name="Brenner S.E."/>
            <person name="Batalov S."/>
            <person name="Forrest A.R."/>
            <person name="Zavolan M."/>
            <person name="Davis M.J."/>
            <person name="Wilming L.G."/>
            <person name="Aidinis V."/>
            <person name="Allen J.E."/>
            <person name="Ambesi-Impiombato A."/>
            <person name="Apweiler R."/>
            <person name="Aturaliya R.N."/>
            <person name="Bailey T.L."/>
            <person name="Bansal M."/>
            <person name="Baxter L."/>
            <person name="Beisel K.W."/>
            <person name="Bersano T."/>
            <person name="Bono H."/>
            <person name="Chalk A.M."/>
            <person name="Chiu K.P."/>
            <person name="Choudhary V."/>
            <person name="Christoffels A."/>
            <person name="Clutterbuck D.R."/>
            <person name="Crowe M.L."/>
            <person name="Dalla E."/>
            <person name="Dalrymple B.P."/>
            <person name="de Bono B."/>
            <person name="Della Gatta G."/>
            <person name="di Bernardo D."/>
            <person name="Down T."/>
            <person name="Engstrom P."/>
            <person name="Fagiolini M."/>
            <person name="Faulkner G."/>
            <person name="Fletcher C.F."/>
            <person name="Fukushima T."/>
            <person name="Furuno M."/>
            <person name="Futaki S."/>
            <person name="Gariboldi M."/>
            <person name="Georgii-Hemming P."/>
            <person name="Gingeras T.R."/>
            <person name="Gojobori T."/>
            <person name="Green R.E."/>
            <person name="Gustincich S."/>
            <person name="Harbers M."/>
            <person name="Hayashi Y."/>
            <person name="Hensch T.K."/>
            <person name="Hirokawa N."/>
            <person name="Hill D."/>
            <person name="Huminiecki L."/>
            <person name="Iacono M."/>
            <person name="Ikeo K."/>
            <person name="Iwama A."/>
            <person name="Ishikawa T."/>
            <person name="Jakt M."/>
            <person name="Kanapin A."/>
            <person name="Katoh M."/>
            <person name="Kawasawa Y."/>
            <person name="Kelso J."/>
            <person name="Kitamura H."/>
            <person name="Kitano H."/>
            <person name="Kollias G."/>
            <person name="Krishnan S.P."/>
            <person name="Kruger A."/>
            <person name="Kummerfeld S.K."/>
            <person name="Kurochkin I.V."/>
            <person name="Lareau L.F."/>
            <person name="Lazarevic D."/>
            <person name="Lipovich L."/>
            <person name="Liu J."/>
            <person name="Liuni S."/>
            <person name="McWilliam S."/>
            <person name="Madan Babu M."/>
            <person name="Madera M."/>
            <person name="Marchionni L."/>
            <person name="Matsuda H."/>
            <person name="Matsuzawa S."/>
            <person name="Miki H."/>
            <person name="Mignone F."/>
            <person name="Miyake S."/>
            <person name="Morris K."/>
            <person name="Mottagui-Tabar S."/>
            <person name="Mulder N."/>
            <person name="Nakano N."/>
            <person name="Nakauchi H."/>
            <person name="Ng P."/>
            <person name="Nilsson R."/>
            <person name="Nishiguchi S."/>
            <person name="Nishikawa S."/>
            <person name="Nori F."/>
            <person name="Ohara O."/>
            <person name="Okazaki Y."/>
            <person name="Orlando V."/>
            <person name="Pang K.C."/>
            <person name="Pavan W.J."/>
            <person name="Pavesi G."/>
            <person name="Pesole G."/>
            <person name="Petrovsky N."/>
            <person name="Piazza S."/>
            <person name="Reed J."/>
            <person name="Reid J.F."/>
            <person name="Ring B.Z."/>
            <person name="Ringwald M."/>
            <person name="Rost B."/>
            <person name="Ruan Y."/>
            <person name="Salzberg S.L."/>
            <person name="Sandelin A."/>
            <person name="Schneider C."/>
            <person name="Schoenbach C."/>
            <person name="Sekiguchi K."/>
            <person name="Semple C.A."/>
            <person name="Seno S."/>
            <person name="Sessa L."/>
            <person name="Sheng Y."/>
            <person name="Shibata Y."/>
            <person name="Shimada H."/>
            <person name="Shimada K."/>
            <person name="Silva D."/>
            <person name="Sinclair B."/>
            <person name="Sperling S."/>
            <person name="Stupka E."/>
            <person name="Sugiura K."/>
            <person name="Sultana R."/>
            <person name="Takenaka Y."/>
            <person name="Taki K."/>
            <person name="Tammoja K."/>
            <person name="Tan S.L."/>
            <person name="Tang S."/>
            <person name="Taylor M.S."/>
            <person name="Tegner J."/>
            <person name="Teichmann S.A."/>
            <person name="Ueda H.R."/>
            <person name="van Nimwegen E."/>
            <person name="Verardo R."/>
            <person name="Wei C.L."/>
            <person name="Yagi K."/>
            <person name="Yamanishi H."/>
            <person name="Zabarovsky E."/>
            <person name="Zhu S."/>
            <person name="Zimmer A."/>
            <person name="Hide W."/>
            <person name="Bult C."/>
            <person name="Grimmond S.M."/>
            <person name="Teasdale R.D."/>
            <person name="Liu E.T."/>
            <person name="Brusic V."/>
            <person name="Quackenbush J."/>
            <person name="Wahlestedt C."/>
            <person name="Mattick J.S."/>
            <person name="Hume D.A."/>
            <person name="Kai C."/>
            <person name="Sasaki D."/>
            <person name="Tomaru Y."/>
            <person name="Fukuda S."/>
            <person name="Kanamori-Katayama M."/>
            <person name="Suzuki M."/>
            <person name="Aoki J."/>
            <person name="Arakawa T."/>
            <person name="Iida J."/>
            <person name="Imamura K."/>
            <person name="Itoh M."/>
            <person name="Kato T."/>
            <person name="Kawaji H."/>
            <person name="Kawagashira N."/>
            <person name="Kawashima T."/>
            <person name="Kojima M."/>
            <person name="Kondo S."/>
            <person name="Konno H."/>
            <person name="Nakano K."/>
            <person name="Ninomiya N."/>
            <person name="Nishio T."/>
            <person name="Okada M."/>
            <person name="Plessy C."/>
            <person name="Shibata K."/>
            <person name="Shiraki T."/>
            <person name="Suzuki S."/>
            <person name="Tagami M."/>
            <person name="Waki K."/>
            <person name="Watahiki A."/>
            <person name="Okamura-Oho Y."/>
            <person name="Suzuki H."/>
            <person name="Kawai J."/>
            <person name="Hayashizaki Y."/>
        </authorList>
    </citation>
    <scope>NUCLEOTIDE SEQUENCE [LARGE SCALE MRNA]</scope>
    <source>
        <strain>C57BL/6J</strain>
        <tissue>Cecum</tissue>
        <tissue>Embryo</tissue>
    </source>
</reference>
<reference key="2">
    <citation type="journal article" date="2009" name="PLoS Biol.">
        <title>Lineage-specific biology revealed by a finished genome assembly of the mouse.</title>
        <authorList>
            <person name="Church D.M."/>
            <person name="Goodstadt L."/>
            <person name="Hillier L.W."/>
            <person name="Zody M.C."/>
            <person name="Goldstein S."/>
            <person name="She X."/>
            <person name="Bult C.J."/>
            <person name="Agarwala R."/>
            <person name="Cherry J.L."/>
            <person name="DiCuccio M."/>
            <person name="Hlavina W."/>
            <person name="Kapustin Y."/>
            <person name="Meric P."/>
            <person name="Maglott D."/>
            <person name="Birtle Z."/>
            <person name="Marques A.C."/>
            <person name="Graves T."/>
            <person name="Zhou S."/>
            <person name="Teague B."/>
            <person name="Potamousis K."/>
            <person name="Churas C."/>
            <person name="Place M."/>
            <person name="Herschleb J."/>
            <person name="Runnheim R."/>
            <person name="Forrest D."/>
            <person name="Amos-Landgraf J."/>
            <person name="Schwartz D.C."/>
            <person name="Cheng Z."/>
            <person name="Lindblad-Toh K."/>
            <person name="Eichler E.E."/>
            <person name="Ponting C.P."/>
        </authorList>
    </citation>
    <scope>NUCLEOTIDE SEQUENCE [LARGE SCALE GENOMIC DNA]</scope>
    <source>
        <strain>C57BL/6J</strain>
    </source>
</reference>
<reference key="3">
    <citation type="journal article" date="2004" name="Genome Res.">
        <title>The status, quality, and expansion of the NIH full-length cDNA project: the Mammalian Gene Collection (MGC).</title>
        <authorList>
            <consortium name="The MGC Project Team"/>
        </authorList>
    </citation>
    <scope>NUCLEOTIDE SEQUENCE [LARGE SCALE MRNA]</scope>
    <source>
        <strain>FVB/N</strain>
        <tissue>Mammary tumor</tissue>
    </source>
</reference>
<reference key="4">
    <citation type="journal article" date="2004" name="Mol. Cell. Biol.">
        <title>Identification of the proteins required for biosynthesis of diphthamide, the target of bacterial ADP-ribosylating toxins on translation elongation factor 2.</title>
        <authorList>
            <person name="Liu S."/>
            <person name="Milne G.T."/>
            <person name="Kuremsky J.G."/>
            <person name="Fink G.R."/>
            <person name="Leppla S.H."/>
        </authorList>
    </citation>
    <scope>FUNCTION</scope>
    <scope>INTERACTION WITH DPH1</scope>
</reference>
<reference key="5">
    <citation type="journal article" date="2007" name="Proc. Natl. Acad. Sci. U.S.A.">
        <title>Large-scale phosphorylation analysis of mouse liver.</title>
        <authorList>
            <person name="Villen J."/>
            <person name="Beausoleil S.A."/>
            <person name="Gerber S.A."/>
            <person name="Gygi S.P."/>
        </authorList>
    </citation>
    <scope>IDENTIFICATION BY MASS SPECTROMETRY [LARGE SCALE ANALYSIS]</scope>
    <source>
        <tissue>Liver</tissue>
    </source>
</reference>
<reference key="6">
    <citation type="journal article" date="2010" name="Cell">
        <title>A tissue-specific atlas of mouse protein phosphorylation and expression.</title>
        <authorList>
            <person name="Huttlin E.L."/>
            <person name="Jedrychowski M.P."/>
            <person name="Elias J.E."/>
            <person name="Goswami T."/>
            <person name="Rad R."/>
            <person name="Beausoleil S.A."/>
            <person name="Villen J."/>
            <person name="Haas W."/>
            <person name="Sowa M.E."/>
            <person name="Gygi S.P."/>
        </authorList>
    </citation>
    <scope>IDENTIFICATION BY MASS SPECTROMETRY [LARGE SCALE ANALYSIS]</scope>
    <source>
        <tissue>Kidney</tissue>
        <tissue>Pancreas</tissue>
        <tissue>Spleen</tissue>
        <tissue>Testis</tissue>
    </source>
</reference>
<reference key="7">
    <citation type="journal article" date="2010" name="PLoS ONE">
        <title>A dominant-negative approach that prevents diphthamide formation confers resistance to Pseudomonas exotoxin A and diphtheria toxin.</title>
        <authorList>
            <person name="Roy V."/>
            <person name="Ghani K."/>
            <person name="Caruso M."/>
        </authorList>
    </citation>
    <scope>INTERACTION WITH DPH1</scope>
</reference>
<evidence type="ECO:0000250" key="1">
    <source>
        <dbReference type="UniProtKB" id="P32461"/>
    </source>
</evidence>
<evidence type="ECO:0000250" key="2">
    <source>
        <dbReference type="UniProtKB" id="Q9BQC3"/>
    </source>
</evidence>
<evidence type="ECO:0000269" key="3">
    <source>
    </source>
</evidence>
<evidence type="ECO:0000269" key="4">
    <source>
    </source>
</evidence>
<evidence type="ECO:0000305" key="5"/>
<organism>
    <name type="scientific">Mus musculus</name>
    <name type="common">Mouse</name>
    <dbReference type="NCBI Taxonomy" id="10090"/>
    <lineage>
        <taxon>Eukaryota</taxon>
        <taxon>Metazoa</taxon>
        <taxon>Chordata</taxon>
        <taxon>Craniata</taxon>
        <taxon>Vertebrata</taxon>
        <taxon>Euteleostomi</taxon>
        <taxon>Mammalia</taxon>
        <taxon>Eutheria</taxon>
        <taxon>Euarchontoglires</taxon>
        <taxon>Glires</taxon>
        <taxon>Rodentia</taxon>
        <taxon>Myomorpha</taxon>
        <taxon>Muroidea</taxon>
        <taxon>Muridae</taxon>
        <taxon>Murinae</taxon>
        <taxon>Mus</taxon>
        <taxon>Mus</taxon>
    </lineage>
</organism>
<name>DPH2_MOUSE</name>